<accession>A5EXM6</accession>
<protein>
    <recommendedName>
        <fullName evidence="1">DNA mismatch repair protein MutL</fullName>
    </recommendedName>
</protein>
<proteinExistence type="inferred from homology"/>
<organism>
    <name type="scientific">Dichelobacter nodosus (strain VCS1703A)</name>
    <dbReference type="NCBI Taxonomy" id="246195"/>
    <lineage>
        <taxon>Bacteria</taxon>
        <taxon>Pseudomonadati</taxon>
        <taxon>Pseudomonadota</taxon>
        <taxon>Gammaproteobacteria</taxon>
        <taxon>Cardiobacteriales</taxon>
        <taxon>Cardiobacteriaceae</taxon>
        <taxon>Dichelobacter</taxon>
    </lineage>
</organism>
<gene>
    <name evidence="1" type="primary">mutL</name>
    <name type="ordered locus">DNO_1116</name>
</gene>
<dbReference type="EMBL" id="CP000513">
    <property type="protein sequence ID" value="ABQ13929.1"/>
    <property type="molecule type" value="Genomic_DNA"/>
</dbReference>
<dbReference type="RefSeq" id="WP_012031420.1">
    <property type="nucleotide sequence ID" value="NC_009446.1"/>
</dbReference>
<dbReference type="SMR" id="A5EXM6"/>
<dbReference type="STRING" id="246195.DNO_1116"/>
<dbReference type="KEGG" id="dno:DNO_1116"/>
<dbReference type="eggNOG" id="COG0323">
    <property type="taxonomic scope" value="Bacteria"/>
</dbReference>
<dbReference type="HOGENOM" id="CLU_004131_4_2_6"/>
<dbReference type="OrthoDB" id="9763467at2"/>
<dbReference type="Proteomes" id="UP000000248">
    <property type="component" value="Chromosome"/>
</dbReference>
<dbReference type="GO" id="GO:0032300">
    <property type="term" value="C:mismatch repair complex"/>
    <property type="evidence" value="ECO:0007669"/>
    <property type="project" value="InterPro"/>
</dbReference>
<dbReference type="GO" id="GO:0005524">
    <property type="term" value="F:ATP binding"/>
    <property type="evidence" value="ECO:0007669"/>
    <property type="project" value="InterPro"/>
</dbReference>
<dbReference type="GO" id="GO:0016887">
    <property type="term" value="F:ATP hydrolysis activity"/>
    <property type="evidence" value="ECO:0007669"/>
    <property type="project" value="InterPro"/>
</dbReference>
<dbReference type="GO" id="GO:0140664">
    <property type="term" value="F:ATP-dependent DNA damage sensor activity"/>
    <property type="evidence" value="ECO:0007669"/>
    <property type="project" value="InterPro"/>
</dbReference>
<dbReference type="GO" id="GO:0030983">
    <property type="term" value="F:mismatched DNA binding"/>
    <property type="evidence" value="ECO:0007669"/>
    <property type="project" value="InterPro"/>
</dbReference>
<dbReference type="GO" id="GO:0006298">
    <property type="term" value="P:mismatch repair"/>
    <property type="evidence" value="ECO:0007669"/>
    <property type="project" value="UniProtKB-UniRule"/>
</dbReference>
<dbReference type="CDD" id="cd16926">
    <property type="entry name" value="HATPase_MutL-MLH-PMS-like"/>
    <property type="match status" value="1"/>
</dbReference>
<dbReference type="CDD" id="cd03482">
    <property type="entry name" value="MutL_Trans_MutL"/>
    <property type="match status" value="1"/>
</dbReference>
<dbReference type="FunFam" id="3.30.565.10:FF:000003">
    <property type="entry name" value="DNA mismatch repair endonuclease MutL"/>
    <property type="match status" value="1"/>
</dbReference>
<dbReference type="Gene3D" id="3.30.230.10">
    <property type="match status" value="1"/>
</dbReference>
<dbReference type="Gene3D" id="3.30.565.10">
    <property type="entry name" value="Histidine kinase-like ATPase, C-terminal domain"/>
    <property type="match status" value="1"/>
</dbReference>
<dbReference type="Gene3D" id="3.30.1540.20">
    <property type="entry name" value="MutL, C-terminal domain, dimerisation subdomain"/>
    <property type="match status" value="1"/>
</dbReference>
<dbReference type="Gene3D" id="3.30.1370.100">
    <property type="entry name" value="MutL, C-terminal domain, regulatory subdomain"/>
    <property type="match status" value="1"/>
</dbReference>
<dbReference type="HAMAP" id="MF_00149">
    <property type="entry name" value="DNA_mis_repair"/>
    <property type="match status" value="1"/>
</dbReference>
<dbReference type="InterPro" id="IPR014762">
    <property type="entry name" value="DNA_mismatch_repair_CS"/>
</dbReference>
<dbReference type="InterPro" id="IPR020667">
    <property type="entry name" value="DNA_mismatch_repair_MutL"/>
</dbReference>
<dbReference type="InterPro" id="IPR013507">
    <property type="entry name" value="DNA_mismatch_S5_2-like"/>
</dbReference>
<dbReference type="InterPro" id="IPR036890">
    <property type="entry name" value="HATPase_C_sf"/>
</dbReference>
<dbReference type="InterPro" id="IPR002099">
    <property type="entry name" value="MutL/Mlh/PMS"/>
</dbReference>
<dbReference type="InterPro" id="IPR038973">
    <property type="entry name" value="MutL/Mlh/Pms-like"/>
</dbReference>
<dbReference type="InterPro" id="IPR014790">
    <property type="entry name" value="MutL_C"/>
</dbReference>
<dbReference type="InterPro" id="IPR042120">
    <property type="entry name" value="MutL_C_dimsub"/>
</dbReference>
<dbReference type="InterPro" id="IPR042121">
    <property type="entry name" value="MutL_C_regsub"/>
</dbReference>
<dbReference type="InterPro" id="IPR037198">
    <property type="entry name" value="MutL_C_sf"/>
</dbReference>
<dbReference type="InterPro" id="IPR020568">
    <property type="entry name" value="Ribosomal_Su5_D2-typ_SF"/>
</dbReference>
<dbReference type="InterPro" id="IPR014721">
    <property type="entry name" value="Ribsml_uS5_D2-typ_fold_subgr"/>
</dbReference>
<dbReference type="NCBIfam" id="TIGR00585">
    <property type="entry name" value="mutl"/>
    <property type="match status" value="1"/>
</dbReference>
<dbReference type="PANTHER" id="PTHR10073">
    <property type="entry name" value="DNA MISMATCH REPAIR PROTEIN MLH, PMS, MUTL"/>
    <property type="match status" value="1"/>
</dbReference>
<dbReference type="PANTHER" id="PTHR10073:SF12">
    <property type="entry name" value="DNA MISMATCH REPAIR PROTEIN MLH1"/>
    <property type="match status" value="1"/>
</dbReference>
<dbReference type="Pfam" id="PF01119">
    <property type="entry name" value="DNA_mis_repair"/>
    <property type="match status" value="1"/>
</dbReference>
<dbReference type="Pfam" id="PF13589">
    <property type="entry name" value="HATPase_c_3"/>
    <property type="match status" value="1"/>
</dbReference>
<dbReference type="Pfam" id="PF08676">
    <property type="entry name" value="MutL_C"/>
    <property type="match status" value="1"/>
</dbReference>
<dbReference type="SMART" id="SM01340">
    <property type="entry name" value="DNA_mis_repair"/>
    <property type="match status" value="1"/>
</dbReference>
<dbReference type="SMART" id="SM00853">
    <property type="entry name" value="MutL_C"/>
    <property type="match status" value="1"/>
</dbReference>
<dbReference type="SUPFAM" id="SSF55874">
    <property type="entry name" value="ATPase domain of HSP90 chaperone/DNA topoisomerase II/histidine kinase"/>
    <property type="match status" value="1"/>
</dbReference>
<dbReference type="SUPFAM" id="SSF118116">
    <property type="entry name" value="DNA mismatch repair protein MutL"/>
    <property type="match status" value="1"/>
</dbReference>
<dbReference type="SUPFAM" id="SSF54211">
    <property type="entry name" value="Ribosomal protein S5 domain 2-like"/>
    <property type="match status" value="1"/>
</dbReference>
<dbReference type="PROSITE" id="PS00058">
    <property type="entry name" value="DNA_MISMATCH_REPAIR_1"/>
    <property type="match status" value="1"/>
</dbReference>
<evidence type="ECO:0000255" key="1">
    <source>
        <dbReference type="HAMAP-Rule" id="MF_00149"/>
    </source>
</evidence>
<evidence type="ECO:0000256" key="2">
    <source>
        <dbReference type="SAM" id="MobiDB-lite"/>
    </source>
</evidence>
<name>MUTL_DICNV</name>
<feature type="chain" id="PRO_1000192169" description="DNA mismatch repair protein MutL">
    <location>
        <begin position="1"/>
        <end position="590"/>
    </location>
</feature>
<feature type="region of interest" description="Disordered" evidence="2">
    <location>
        <begin position="335"/>
        <end position="354"/>
    </location>
</feature>
<feature type="compositionally biased region" description="Polar residues" evidence="2">
    <location>
        <begin position="335"/>
        <end position="351"/>
    </location>
</feature>
<comment type="function">
    <text evidence="1">This protein is involved in the repair of mismatches in DNA. It is required for dam-dependent methyl-directed DNA mismatch repair. May act as a 'molecular matchmaker', a protein that promotes the formation of a stable complex between two or more DNA-binding proteins in an ATP-dependent manner without itself being part of a final effector complex.</text>
</comment>
<comment type="similarity">
    <text evidence="1">Belongs to the DNA mismatch repair MutL/HexB family.</text>
</comment>
<sequence>MAKILLLPPALINQIAAGEVIERPASVVKEIVENAIDAGATRLALEIEAAGSKLIRLSDNGSGIEKEDLALAFTTHATSKIRTLEDLEQVSSLGFRGEALASIASISKTTLTSCTQSSDHAWKISPHLNENITPAAHPQGTTIEIRDLFYNTPARKKFLRSDRTERYHITQLLAGIALSRAPFVITLHEQDRKILEYGGKTLKESLKSVMGDEFLAQSIEIQAEHEGMHLHGWVGLPTYTHQQTDKQYFFVNQRLVSDKLVAHAIKQAYEDMIHRQRHPIFVLFLTLDPALVDVNAHPSKREVRFRQAQLTHDFMFSSLHRALRNIQPRAAQLTPLSSASPKLPESTTATAQPHHKMIPHTFARPPRLQETKAYYQWAQTPPPAVTPAPQPEIKKINLPLGQALGQIHGTFIVAENAQGLVVVDMHAAHERILYEQFKSVLKTQKQIPVQRLLLPLPLTLTPVQQDSLAQHGAWLKTLGFDWTINDKEFILLTVPARLKNSDCISIIGDVLQELSEFPKSTQLQRAQEQIIANMCCHQAVRAHDLLSISEMNQLLRDLETTPAAGQCNHGRPTWIQLDATQLDALFLRGQ</sequence>
<keyword id="KW-0227">DNA damage</keyword>
<keyword id="KW-0234">DNA repair</keyword>
<keyword id="KW-1185">Reference proteome</keyword>
<reference key="1">
    <citation type="journal article" date="2007" name="Nat. Biotechnol.">
        <title>Genome sequence and identification of candidate vaccine antigens from the animal pathogen Dichelobacter nodosus.</title>
        <authorList>
            <person name="Myers G.S.A."/>
            <person name="Parker D."/>
            <person name="Al-Hasani K."/>
            <person name="Kennan R.M."/>
            <person name="Seemann T."/>
            <person name="Ren Q."/>
            <person name="Badger J.H."/>
            <person name="Selengut J.D."/>
            <person name="Deboy R.T."/>
            <person name="Tettelin H."/>
            <person name="Boyce J.D."/>
            <person name="McCarl V.P."/>
            <person name="Han X."/>
            <person name="Nelson W.C."/>
            <person name="Madupu R."/>
            <person name="Mohamoud Y."/>
            <person name="Holley T."/>
            <person name="Fedorova N."/>
            <person name="Khouri H."/>
            <person name="Bottomley S.P."/>
            <person name="Whittington R.J."/>
            <person name="Adler B."/>
            <person name="Songer J.G."/>
            <person name="Rood J.I."/>
            <person name="Paulsen I.T."/>
        </authorList>
    </citation>
    <scope>NUCLEOTIDE SEQUENCE [LARGE SCALE GENOMIC DNA]</scope>
    <source>
        <strain>VCS1703A</strain>
    </source>
</reference>